<evidence type="ECO:0000250" key="1"/>
<evidence type="ECO:0000305" key="2"/>
<proteinExistence type="evidence at protein level"/>
<sequence length="138" mass="15688">RELLDVDGNFLRNGGSYYIVPAFRGKGGGLELARTGSETCPRTVVQAPAEQSRGLPARLSTPPRIRYIGPEFYLTIEFEEQKPPSCLRDSNLQWKVEEESQIVKIASKEEEQLFGSFQIKPYRDDYKLVYCEPQQGGR</sequence>
<organism>
    <name type="scientific">Adenanthera pavonina</name>
    <name type="common">Sandal bead tree</name>
    <name type="synonym">Condori wood</name>
    <dbReference type="NCBI Taxonomy" id="3811"/>
    <lineage>
        <taxon>Eukaryota</taxon>
        <taxon>Viridiplantae</taxon>
        <taxon>Streptophyta</taxon>
        <taxon>Embryophyta</taxon>
        <taxon>Tracheophyta</taxon>
        <taxon>Spermatophyta</taxon>
        <taxon>Magnoliopsida</taxon>
        <taxon>eudicotyledons</taxon>
        <taxon>Gunneridae</taxon>
        <taxon>Pentapetalae</taxon>
        <taxon>rosids</taxon>
        <taxon>fabids</taxon>
        <taxon>Fabales</taxon>
        <taxon>Fabaceae</taxon>
        <taxon>Caesalpinioideae</taxon>
        <taxon>mimosoid clade</taxon>
        <taxon>Mimoseae</taxon>
        <taxon>Adenanthera</taxon>
    </lineage>
</organism>
<comment type="function">
    <text>Inhibition of trypsin.</text>
</comment>
<comment type="subunit">
    <text>Heterodimer of an alpha and a beta chain linked by a disulfide bond.</text>
</comment>
<comment type="similarity">
    <text evidence="2">Belongs to the protease inhibitor I3 (leguminous Kunitz-type inhibitor) family.</text>
</comment>
<reference key="1">
    <citation type="journal article" date="1986" name="Biochim. Biophys. Acta">
        <title>The amino acid sequence and reactive (inhibitory) site of the major trypsin isoinhibitor (DE5) isolated from seeds of the Brazilian Carolina tree (Adenanthera pavonina L.).</title>
        <authorList>
            <person name="Richardson M."/>
            <person name="Campos F.A.P."/>
            <person name="Xavier-Filho J."/>
            <person name="Macedo M.L.R."/>
            <person name="Maia G.M.C."/>
            <person name="Yarwood A."/>
        </authorList>
    </citation>
    <scope>PROTEIN SEQUENCE</scope>
    <source>
        <tissue>Seed</tissue>
    </source>
</reference>
<feature type="chain" id="PRO_0000083292" description="Trypsin inhibitor DE5 alpha chain">
    <location>
        <begin position="1"/>
        <end position="138"/>
    </location>
</feature>
<feature type="site" description="Reactive bond for trypsin">
    <location>
        <begin position="64"/>
        <end position="65"/>
    </location>
</feature>
<feature type="disulfide bond" evidence="1">
    <location>
        <begin position="40"/>
        <end position="86"/>
    </location>
</feature>
<feature type="disulfide bond" description="Interchain (with beta chain)" evidence="1">
    <location>
        <position position="131"/>
    </location>
</feature>
<feature type="sequence variant" description="In less than 10% of the chains.">
    <original>L</original>
    <variation>F</variation>
    <location>
        <position position="4"/>
    </location>
</feature>
<feature type="sequence variant" description="In less than 10% of the chains.">
    <original>V</original>
    <variation>A</variation>
    <location>
        <position position="6"/>
    </location>
</feature>
<feature type="sequence variant" description="In less than 10% of the chains.">
    <original>L</original>
    <variation>F</variation>
    <location>
        <position position="11"/>
    </location>
</feature>
<feature type="sequence variant" description="In less than 10% of the chains.">
    <original>A</original>
    <variation>V</variation>
    <location>
        <position position="22"/>
    </location>
</feature>
<feature type="sequence variant" description="In less than 10% of the chains.">
    <original>A</original>
    <variation>S</variation>
    <location>
        <position position="49"/>
    </location>
</feature>
<feature type="sequence variant" description="In less than 10% of the chains.">
    <original>S</original>
    <variation>Q</variation>
    <location>
        <position position="52"/>
    </location>
</feature>
<feature type="sequence variant" description="In less than 10% of the chains.">
    <original>Y</original>
    <variation>F</variation>
    <location>
        <position position="67"/>
    </location>
</feature>
<feature type="sequence variant" description="In less than 10% of the chains.">
    <original>D</original>
    <variation>G</variation>
    <location>
        <position position="89"/>
    </location>
</feature>
<feature type="sequence variant" description="In less than 10% of the chains.">
    <original>E</original>
    <variation>D</variation>
    <location>
        <position position="97"/>
    </location>
</feature>
<feature type="sequence variant" description="In less than 10% of the chains.">
    <original>K</original>
    <variation>E</variation>
    <location>
        <position position="108"/>
    </location>
</feature>
<feature type="sequence variant" description="In less than 10% of the chains.">
    <original>Q</original>
    <variation>R</variation>
    <location>
        <position position="112"/>
    </location>
</feature>
<feature type="sequence variant" description="In less than 10% of the chains.">
    <original>L</original>
    <variation>H</variation>
    <location>
        <position position="113"/>
    </location>
</feature>
<feature type="sequence variant" description="In less than 10% of the chains.">
    <original>K</original>
    <variation>Q</variation>
    <location>
        <position position="120"/>
    </location>
</feature>
<keyword id="KW-0903">Direct protein sequencing</keyword>
<keyword id="KW-1015">Disulfide bond</keyword>
<keyword id="KW-0646">Protease inhibitor</keyword>
<keyword id="KW-0722">Serine protease inhibitor</keyword>
<protein>
    <recommendedName>
        <fullName>Trypsin inhibitor DE5 alpha chain</fullName>
    </recommendedName>
</protein>
<name>ID5A_ADEPA</name>
<dbReference type="PIR" id="A24376">
    <property type="entry name" value="A24376"/>
</dbReference>
<dbReference type="SMR" id="P09941"/>
<dbReference type="GO" id="GO:0004867">
    <property type="term" value="F:serine-type endopeptidase inhibitor activity"/>
    <property type="evidence" value="ECO:0007669"/>
    <property type="project" value="UniProtKB-KW"/>
</dbReference>
<dbReference type="Gene3D" id="2.80.10.50">
    <property type="match status" value="1"/>
</dbReference>
<dbReference type="InterPro" id="IPR011065">
    <property type="entry name" value="Kunitz_inhibitor_STI-like_sf"/>
</dbReference>
<dbReference type="InterPro" id="IPR002160">
    <property type="entry name" value="Prot_inh_Kunz-lg"/>
</dbReference>
<dbReference type="PANTHER" id="PTHR33107">
    <property type="entry name" value="KUNITZ TRYPSIN INHIBITOR 2"/>
    <property type="match status" value="1"/>
</dbReference>
<dbReference type="PANTHER" id="PTHR33107:SF81">
    <property type="entry name" value="TRYPSIN INHIBITOR A"/>
    <property type="match status" value="1"/>
</dbReference>
<dbReference type="Pfam" id="PF00197">
    <property type="entry name" value="Kunitz_legume"/>
    <property type="match status" value="1"/>
</dbReference>
<dbReference type="PRINTS" id="PR00291">
    <property type="entry name" value="KUNITZINHBTR"/>
</dbReference>
<dbReference type="SMART" id="SM00452">
    <property type="entry name" value="STI"/>
    <property type="match status" value="1"/>
</dbReference>
<dbReference type="SUPFAM" id="SSF50386">
    <property type="entry name" value="STI-like"/>
    <property type="match status" value="1"/>
</dbReference>
<dbReference type="PROSITE" id="PS00283">
    <property type="entry name" value="SOYBEAN_KUNITZ"/>
    <property type="match status" value="1"/>
</dbReference>
<accession>P09941</accession>